<comment type="function">
    <text evidence="1">May be involved in recombination.</text>
</comment>
<comment type="subcellular location">
    <subcellularLocation>
        <location evidence="1">Cytoplasm</location>
        <location evidence="1">Nucleoid</location>
    </subcellularLocation>
</comment>
<comment type="similarity">
    <text evidence="1">Belongs to the RdgC family.</text>
</comment>
<feature type="chain" id="PRO_1000099069" description="Recombination-associated protein RdgC">
    <location>
        <begin position="1"/>
        <end position="303"/>
    </location>
</feature>
<keyword id="KW-0963">Cytoplasm</keyword>
<keyword id="KW-0233">DNA recombination</keyword>
<gene>
    <name evidence="1" type="primary">rdgC</name>
    <name type="ordered locus">SeD_A0430</name>
</gene>
<reference key="1">
    <citation type="journal article" date="2011" name="J. Bacteriol.">
        <title>Comparative genomics of 28 Salmonella enterica isolates: evidence for CRISPR-mediated adaptive sublineage evolution.</title>
        <authorList>
            <person name="Fricke W.F."/>
            <person name="Mammel M.K."/>
            <person name="McDermott P.F."/>
            <person name="Tartera C."/>
            <person name="White D.G."/>
            <person name="Leclerc J.E."/>
            <person name="Ravel J."/>
            <person name="Cebula T.A."/>
        </authorList>
    </citation>
    <scope>NUCLEOTIDE SEQUENCE [LARGE SCALE GENOMIC DNA]</scope>
    <source>
        <strain>CT_02021853</strain>
    </source>
</reference>
<name>RDGC_SALDC</name>
<evidence type="ECO:0000255" key="1">
    <source>
        <dbReference type="HAMAP-Rule" id="MF_00194"/>
    </source>
</evidence>
<accession>B5FKP7</accession>
<sequence length="303" mass="33976">MLWFKNLMVYRLSRDITLRAEEMEKQLASMTFTPCGSQDMAKMGWVPPMGSHSDALTHTANGQIIICARKEEKILPSPVIKQALEAKIQKLEADQGRKLKKTEKDSLKDEVLHSLLPRAFSRFSQTMMWIDTVNGLIMVDCASAKKAEDTLALLRKSLGSLPVVPLALENPIELTLTEWVRSGTVAQGFQLLDEAELKAMLEDGGVIRAKKQDLVSDEIAVHIEAGKVVTKLALDWQQRIQFVMCDDGSIKRLKFCDELRDQNEDIDREDFAQRFDADFILMTGELAALIQSLVEGLGGEAQR</sequence>
<protein>
    <recommendedName>
        <fullName evidence="1">Recombination-associated protein RdgC</fullName>
    </recommendedName>
</protein>
<dbReference type="EMBL" id="CP001144">
    <property type="protein sequence ID" value="ACH74832.1"/>
    <property type="molecule type" value="Genomic_DNA"/>
</dbReference>
<dbReference type="RefSeq" id="WP_000964305.1">
    <property type="nucleotide sequence ID" value="NC_011205.1"/>
</dbReference>
<dbReference type="SMR" id="B5FKP7"/>
<dbReference type="KEGG" id="sed:SeD_A0430"/>
<dbReference type="HOGENOM" id="CLU_052038_1_1_6"/>
<dbReference type="Proteomes" id="UP000008322">
    <property type="component" value="Chromosome"/>
</dbReference>
<dbReference type="GO" id="GO:0043590">
    <property type="term" value="C:bacterial nucleoid"/>
    <property type="evidence" value="ECO:0007669"/>
    <property type="project" value="TreeGrafter"/>
</dbReference>
<dbReference type="GO" id="GO:0005737">
    <property type="term" value="C:cytoplasm"/>
    <property type="evidence" value="ECO:0007669"/>
    <property type="project" value="UniProtKB-UniRule"/>
</dbReference>
<dbReference type="GO" id="GO:0003690">
    <property type="term" value="F:double-stranded DNA binding"/>
    <property type="evidence" value="ECO:0007669"/>
    <property type="project" value="TreeGrafter"/>
</dbReference>
<dbReference type="GO" id="GO:0006310">
    <property type="term" value="P:DNA recombination"/>
    <property type="evidence" value="ECO:0007669"/>
    <property type="project" value="UniProtKB-UniRule"/>
</dbReference>
<dbReference type="GO" id="GO:0000018">
    <property type="term" value="P:regulation of DNA recombination"/>
    <property type="evidence" value="ECO:0007669"/>
    <property type="project" value="TreeGrafter"/>
</dbReference>
<dbReference type="HAMAP" id="MF_00194">
    <property type="entry name" value="RdgC"/>
    <property type="match status" value="1"/>
</dbReference>
<dbReference type="InterPro" id="IPR007476">
    <property type="entry name" value="RdgC"/>
</dbReference>
<dbReference type="NCBIfam" id="NF001460">
    <property type="entry name" value="PRK00321.1-1"/>
    <property type="match status" value="1"/>
</dbReference>
<dbReference type="NCBIfam" id="NF001462">
    <property type="entry name" value="PRK00321.1-3"/>
    <property type="match status" value="1"/>
</dbReference>
<dbReference type="NCBIfam" id="NF001464">
    <property type="entry name" value="PRK00321.1-5"/>
    <property type="match status" value="1"/>
</dbReference>
<dbReference type="PANTHER" id="PTHR38103">
    <property type="entry name" value="RECOMBINATION-ASSOCIATED PROTEIN RDGC"/>
    <property type="match status" value="1"/>
</dbReference>
<dbReference type="PANTHER" id="PTHR38103:SF1">
    <property type="entry name" value="RECOMBINATION-ASSOCIATED PROTEIN RDGC"/>
    <property type="match status" value="1"/>
</dbReference>
<dbReference type="Pfam" id="PF04381">
    <property type="entry name" value="RdgC"/>
    <property type="match status" value="1"/>
</dbReference>
<proteinExistence type="inferred from homology"/>
<organism>
    <name type="scientific">Salmonella dublin (strain CT_02021853)</name>
    <dbReference type="NCBI Taxonomy" id="439851"/>
    <lineage>
        <taxon>Bacteria</taxon>
        <taxon>Pseudomonadati</taxon>
        <taxon>Pseudomonadota</taxon>
        <taxon>Gammaproteobacteria</taxon>
        <taxon>Enterobacterales</taxon>
        <taxon>Enterobacteriaceae</taxon>
        <taxon>Salmonella</taxon>
    </lineage>
</organism>